<keyword id="KW-0963">Cytoplasm</keyword>
<keyword id="KW-0378">Hydrolase</keyword>
<keyword id="KW-0464">Manganese</keyword>
<keyword id="KW-0479">Metal-binding</keyword>
<keyword id="KW-0620">Polyamine biosynthesis</keyword>
<keyword id="KW-1185">Reference proteome</keyword>
<keyword id="KW-0745">Spermidine biosynthesis</keyword>
<evidence type="ECO:0000255" key="1">
    <source>
        <dbReference type="PROSITE-ProRule" id="PRU00742"/>
    </source>
</evidence>
<evidence type="ECO:0000269" key="2">
    <source>
    </source>
</evidence>
<evidence type="ECO:0000305" key="3"/>
<evidence type="ECO:0000305" key="4">
    <source>
    </source>
</evidence>
<organism>
    <name type="scientific">Thermus thermophilus (strain ATCC 27634 / DSM 579 / HB8)</name>
    <dbReference type="NCBI Taxonomy" id="300852"/>
    <lineage>
        <taxon>Bacteria</taxon>
        <taxon>Thermotogati</taxon>
        <taxon>Deinococcota</taxon>
        <taxon>Deinococci</taxon>
        <taxon>Thermales</taxon>
        <taxon>Thermaceae</taxon>
        <taxon>Thermus</taxon>
    </lineage>
</organism>
<protein>
    <recommendedName>
        <fullName>N(1)-aminopropylagmatine ureohydrolase</fullName>
        <shortName evidence="3">APA ureohydrolase</shortName>
        <shortName evidence="3">APAUH</shortName>
        <ecNumber>3.5.3.24</ecNumber>
    </recommendedName>
    <alternativeName>
        <fullName>Protein SpeB homolog</fullName>
    </alternativeName>
</protein>
<proteinExistence type="evidence at protein level"/>
<name>APAUH_THET8</name>
<dbReference type="EC" id="3.5.3.24"/>
<dbReference type="EMBL" id="AP008226">
    <property type="protein sequence ID" value="BAD70952.1"/>
    <property type="molecule type" value="Genomic_DNA"/>
</dbReference>
<dbReference type="RefSeq" id="YP_144395.1">
    <property type="nucleotide sequence ID" value="NC_006461.1"/>
</dbReference>
<dbReference type="SMR" id="Q5SJ85"/>
<dbReference type="EnsemblBacteria" id="BAD70952">
    <property type="protein sequence ID" value="BAD70952"/>
    <property type="gene ID" value="BAD70952"/>
</dbReference>
<dbReference type="GeneID" id="3168815"/>
<dbReference type="KEGG" id="ttj:TTHA1129"/>
<dbReference type="PATRIC" id="fig|300852.9.peg.1108"/>
<dbReference type="eggNOG" id="COG0010">
    <property type="taxonomic scope" value="Bacteria"/>
</dbReference>
<dbReference type="HOGENOM" id="CLU_039478_0_2_0"/>
<dbReference type="PhylomeDB" id="Q5SJ85"/>
<dbReference type="BioCyc" id="MetaCyc:MONOMER-16737"/>
<dbReference type="BRENDA" id="3.5.3.24">
    <property type="organism ID" value="2305"/>
</dbReference>
<dbReference type="UniPathway" id="UPA00248"/>
<dbReference type="Proteomes" id="UP000000532">
    <property type="component" value="Chromosome"/>
</dbReference>
<dbReference type="GO" id="GO:0005737">
    <property type="term" value="C:cytoplasm"/>
    <property type="evidence" value="ECO:0007669"/>
    <property type="project" value="UniProtKB-SubCell"/>
</dbReference>
<dbReference type="GO" id="GO:0008783">
    <property type="term" value="F:agmatinase activity"/>
    <property type="evidence" value="ECO:0007669"/>
    <property type="project" value="TreeGrafter"/>
</dbReference>
<dbReference type="GO" id="GO:0043920">
    <property type="term" value="F:aminopropylagmatine ureohydrolase activity"/>
    <property type="evidence" value="ECO:0007669"/>
    <property type="project" value="UniProtKB-EC"/>
</dbReference>
<dbReference type="GO" id="GO:0016813">
    <property type="term" value="F:hydrolase activity, acting on carbon-nitrogen (but not peptide) bonds, in linear amidines"/>
    <property type="evidence" value="ECO:0000315"/>
    <property type="project" value="UniProtKB"/>
</dbReference>
<dbReference type="GO" id="GO:0046872">
    <property type="term" value="F:metal ion binding"/>
    <property type="evidence" value="ECO:0007669"/>
    <property type="project" value="UniProtKB-KW"/>
</dbReference>
<dbReference type="GO" id="GO:0033389">
    <property type="term" value="P:putrescine biosynthetic process from arginine, via agmatine"/>
    <property type="evidence" value="ECO:0007669"/>
    <property type="project" value="TreeGrafter"/>
</dbReference>
<dbReference type="GO" id="GO:0008295">
    <property type="term" value="P:spermidine biosynthetic process"/>
    <property type="evidence" value="ECO:0000315"/>
    <property type="project" value="UniProtKB"/>
</dbReference>
<dbReference type="CDD" id="cd11593">
    <property type="entry name" value="Agmatinase-like_2"/>
    <property type="match status" value="1"/>
</dbReference>
<dbReference type="FunFam" id="3.40.800.10:FF:000026">
    <property type="entry name" value="N(1)-aminopropylagmatine ureohydrolase"/>
    <property type="match status" value="1"/>
</dbReference>
<dbReference type="Gene3D" id="3.40.800.10">
    <property type="entry name" value="Ureohydrolase domain"/>
    <property type="match status" value="1"/>
</dbReference>
<dbReference type="InterPro" id="IPR005925">
    <property type="entry name" value="Agmatinase-rel"/>
</dbReference>
<dbReference type="InterPro" id="IPR006035">
    <property type="entry name" value="Ureohydrolase"/>
</dbReference>
<dbReference type="InterPro" id="IPR023696">
    <property type="entry name" value="Ureohydrolase_dom_sf"/>
</dbReference>
<dbReference type="NCBIfam" id="TIGR01230">
    <property type="entry name" value="agmatinase"/>
    <property type="match status" value="1"/>
</dbReference>
<dbReference type="PANTHER" id="PTHR11358">
    <property type="entry name" value="ARGINASE/AGMATINASE"/>
    <property type="match status" value="1"/>
</dbReference>
<dbReference type="PANTHER" id="PTHR11358:SF26">
    <property type="entry name" value="GUANIDINO ACID HYDROLASE, MITOCHONDRIAL"/>
    <property type="match status" value="1"/>
</dbReference>
<dbReference type="Pfam" id="PF00491">
    <property type="entry name" value="Arginase"/>
    <property type="match status" value="1"/>
</dbReference>
<dbReference type="PIRSF" id="PIRSF036979">
    <property type="entry name" value="Arginase"/>
    <property type="match status" value="1"/>
</dbReference>
<dbReference type="SUPFAM" id="SSF52768">
    <property type="entry name" value="Arginase/deacetylase"/>
    <property type="match status" value="1"/>
</dbReference>
<dbReference type="PROSITE" id="PS51409">
    <property type="entry name" value="ARGINASE_2"/>
    <property type="match status" value="1"/>
</dbReference>
<gene>
    <name type="ordered locus">TTHA1129</name>
</gene>
<sequence length="293" mass="32483">MRLVFGEKDTPYEEARVVVLPVPYDLSLSFLPGARRGPEAILLASRELEPFLLELGAAPEEVGIHAAEPVPWVAGMAEESHRLIREEALRHLRAGKWVVALGGDHSVTHPLVQAHREALGDFSLLHVDAHADLYPEWQGSVYSHASPFYRLLTEGFPLVQVGIRAMDRDSLRLARKKGVALFPAHRIHREGLPLDEILRALGKRVYISLDFDALDPSLMPSVGTPLPGGLSYRQVVDLLEAVFREKEVVGMDFVELSPNGQFHAEMTAAQLVYHAIGLKGLQAGWLSREVDHI</sequence>
<reference key="1">
    <citation type="submission" date="2004-11" db="EMBL/GenBank/DDBJ databases">
        <title>Complete genome sequence of Thermus thermophilus HB8.</title>
        <authorList>
            <person name="Masui R."/>
            <person name="Kurokawa K."/>
            <person name="Nakagawa N."/>
            <person name="Tokunaga F."/>
            <person name="Koyama Y."/>
            <person name="Shibata T."/>
            <person name="Oshima T."/>
            <person name="Yokoyama S."/>
            <person name="Yasunaga T."/>
            <person name="Kuramitsu S."/>
        </authorList>
    </citation>
    <scope>NUCLEOTIDE SEQUENCE [LARGE SCALE GENOMIC DNA]</scope>
    <source>
        <strain>ATCC 27634 / DSM 579 / HB8</strain>
    </source>
</reference>
<reference key="2">
    <citation type="journal article" date="2005" name="J. Biol. Chem.">
        <title>N1-aminopropylagmatine, a new polyamine produced as a key intermediate in polyamine biosynthesis of an extreme thermophile, Thermus thermophilus.</title>
        <authorList>
            <person name="Ohnuma M."/>
            <person name="Terui Y."/>
            <person name="Tamakoshi M."/>
            <person name="Mitome H."/>
            <person name="Niitsu M."/>
            <person name="Samejima K."/>
            <person name="Kawashima E."/>
            <person name="Oshima T."/>
        </authorList>
    </citation>
    <scope>FUNCTION</scope>
    <scope>CATALYTIC ACTIVITY</scope>
    <scope>DISRUPTION PHENOTYPE</scope>
    <scope>SUBSTRATE SPECIFICITY</scope>
    <source>
        <strain>ATCC 27634 / DSM 579 / HB8</strain>
    </source>
</reference>
<accession>Q5SJ85</accession>
<comment type="function">
    <text evidence="2">Involved in the biosynthesis of polyamines which are thought to support the growth of thermophilic microorganisms under high-temperature conditions. It seems that long-chain and branched-chain of polyamines effectively stabilize DNA and RNA, respectively. Catalyzes the decarboxylation of N1-(3-aminopropyl)agmatine to yield spermidine and urea. It cannot use agmatine as substrate.</text>
</comment>
<comment type="catalytic activity">
    <reaction evidence="2">
        <text>N(1)-(3-aminopropyl)agmatine + H2O = urea + spermidine</text>
        <dbReference type="Rhea" id="RHEA:35827"/>
        <dbReference type="ChEBI" id="CHEBI:15377"/>
        <dbReference type="ChEBI" id="CHEBI:16199"/>
        <dbReference type="ChEBI" id="CHEBI:57834"/>
        <dbReference type="ChEBI" id="CHEBI:64335"/>
        <dbReference type="EC" id="3.5.3.24"/>
    </reaction>
</comment>
<comment type="cofactor">
    <cofactor evidence="1">
        <name>Mn(2+)</name>
        <dbReference type="ChEBI" id="CHEBI:29035"/>
    </cofactor>
    <text evidence="1">Binds 2 manganese ions per subunit.</text>
</comment>
<comment type="pathway">
    <text>Amine and polyamine biosynthesis; spermidine biosynthesis.</text>
</comment>
<comment type="subcellular location">
    <subcellularLocation>
        <location>Cytoplasm</location>
    </subcellularLocation>
</comment>
<comment type="disruption phenotype">
    <text evidence="2">Cells lacking this gene show a significant defect of growth at 78 degrees Celsius and accumulate N1-aminopropylagmatine. The double mutant of speB and speE shows defective growth at 70 degrees Celsius and significant defective growth at 78 degrees Celsius. It accumulates agmatine and N1-aminopropylagmatine.</text>
</comment>
<comment type="miscellaneous">
    <text evidence="4">In T.thermophilus, the biosynthetic pathways of spermidine operates via N1-aminopropylagmatine without the production of putrescine.</text>
</comment>
<comment type="similarity">
    <text evidence="1">Belongs to the arginase family.</text>
</comment>
<feature type="chain" id="PRO_0000429863" description="N(1)-aminopropylagmatine ureohydrolase">
    <location>
        <begin position="1"/>
        <end position="293"/>
    </location>
</feature>
<feature type="binding site" evidence="1">
    <location>
        <position position="105"/>
    </location>
    <ligand>
        <name>Mn(2+)</name>
        <dbReference type="ChEBI" id="CHEBI:29035"/>
        <label>1</label>
    </ligand>
</feature>
<feature type="binding site" evidence="1">
    <location>
        <position position="128"/>
    </location>
    <ligand>
        <name>Mn(2+)</name>
        <dbReference type="ChEBI" id="CHEBI:29035"/>
        <label>1</label>
    </ligand>
</feature>
<feature type="binding site" evidence="1">
    <location>
        <position position="128"/>
    </location>
    <ligand>
        <name>Mn(2+)</name>
        <dbReference type="ChEBI" id="CHEBI:29035"/>
        <label>2</label>
    </ligand>
</feature>
<feature type="binding site" evidence="1">
    <location>
        <position position="130"/>
    </location>
    <ligand>
        <name>Mn(2+)</name>
        <dbReference type="ChEBI" id="CHEBI:29035"/>
        <label>2</label>
    </ligand>
</feature>
<feature type="binding site" evidence="1">
    <location>
        <position position="132"/>
    </location>
    <ligand>
        <name>Mn(2+)</name>
        <dbReference type="ChEBI" id="CHEBI:29035"/>
        <label>1</label>
    </ligand>
</feature>
<feature type="binding site" evidence="1">
    <location>
        <position position="210"/>
    </location>
    <ligand>
        <name>Mn(2+)</name>
        <dbReference type="ChEBI" id="CHEBI:29035"/>
        <label>1</label>
    </ligand>
</feature>
<feature type="binding site" evidence="1">
    <location>
        <position position="210"/>
    </location>
    <ligand>
        <name>Mn(2+)</name>
        <dbReference type="ChEBI" id="CHEBI:29035"/>
        <label>2</label>
    </ligand>
</feature>
<feature type="binding site" evidence="1">
    <location>
        <position position="212"/>
    </location>
    <ligand>
        <name>Mn(2+)</name>
        <dbReference type="ChEBI" id="CHEBI:29035"/>
        <label>2</label>
    </ligand>
</feature>